<reference key="1">
    <citation type="journal article" date="2001" name="DNA Res.">
        <title>Complete genome sequence of enterohemorrhagic Escherichia coli O157:H7 and genomic comparison with a laboratory strain K-12.</title>
        <authorList>
            <person name="Hayashi T."/>
            <person name="Makino K."/>
            <person name="Ohnishi M."/>
            <person name="Kurokawa K."/>
            <person name="Ishii K."/>
            <person name="Yokoyama K."/>
            <person name="Han C.-G."/>
            <person name="Ohtsubo E."/>
            <person name="Nakayama K."/>
            <person name="Murata T."/>
            <person name="Tanaka M."/>
            <person name="Tobe T."/>
            <person name="Iida T."/>
            <person name="Takami H."/>
            <person name="Honda T."/>
            <person name="Sasakawa C."/>
            <person name="Ogasawara N."/>
            <person name="Yasunaga T."/>
            <person name="Kuhara S."/>
            <person name="Shiba T."/>
            <person name="Hattori M."/>
            <person name="Shinagawa H."/>
        </authorList>
    </citation>
    <scope>NUCLEOTIDE SEQUENCE [LARGE SCALE GENOMIC DNA]</scope>
    <source>
        <strain>O157:H7 / Sakai / RIMD 0509952 / EHEC</strain>
    </source>
</reference>
<reference key="2">
    <citation type="journal article" date="2006" name="Microbiology">
        <title>Phosphoethanolamine substitution in the lipid A of Escherichia coli O157:H7 and its association with PmrC.</title>
        <authorList>
            <person name="Kim S.H."/>
            <person name="Jia W."/>
            <person name="Parreira V.R."/>
            <person name="Bishop R.E."/>
            <person name="Gyles C.L."/>
        </authorList>
    </citation>
    <scope>FUNCTION</scope>
    <scope>DISRUPTION PHENOTYPE</scope>
    <source>
        <strain>O157:H7 / 4304</strain>
        <strain>O157:H7 / Sakai / RIMD 0509952 / EHEC</strain>
    </source>
</reference>
<keyword id="KW-0997">Cell inner membrane</keyword>
<keyword id="KW-1003">Cell membrane</keyword>
<keyword id="KW-0472">Membrane</keyword>
<keyword id="KW-1185">Reference proteome</keyword>
<keyword id="KW-0808">Transferase</keyword>
<keyword id="KW-0812">Transmembrane</keyword>
<keyword id="KW-1133">Transmembrane helix</keyword>
<organism>
    <name type="scientific">Escherichia coli O157:H7</name>
    <dbReference type="NCBI Taxonomy" id="83334"/>
    <lineage>
        <taxon>Bacteria</taxon>
        <taxon>Pseudomonadati</taxon>
        <taxon>Pseudomonadota</taxon>
        <taxon>Gammaproteobacteria</taxon>
        <taxon>Enterobacterales</taxon>
        <taxon>Enterobacteriaceae</taxon>
        <taxon>Escherichia</taxon>
    </lineage>
</organism>
<sequence>MLKRLLKRPSLNLLAWLLLAAFYISICLNIAFFKQVLQALPLDSLHNVLVFLSMPVVAFSVINIVLTLSSFLWLNRPLACLFILVGAAAQYFIMTYGIVIDRSMIANIIDTTPAESYALMTPQMLLTLGFSGVLAALIACWIKIKPATSRLRSVLFRGANILVSVLLILLVAALFYKDYASLFRNNKELVKSLSPSNSIVASWSWYSHQRLANLPLVRIGEDAHRNPLMQNEKRKNLTILIVGETSRAENFSLNGYPRETNPRLAKDNVVYFPNTASCGTATAVSVPCMFSDMPREHYKEELAQHQEGVLDIIQRAGINVLWNDNDGGCKGACDRVPHQNVTALNLPDQCINGECYDEVLFHGLEEYINNLQGDGVIVLHTIGSHRPTYYNRYPPQFRKFTPTCDTNEIQTCTKEQLVNTYDNTLVYVDYIVDKAINLLKEHQDKFTTSLVYLSDHGESLGENGIYLHGLPYAIAPDSQKQVPMLLWLSEDYQKRYQVDQNCLQKQAQTQHYSQDNLFSTLLGLTGVETKYYQAADDILQTCRRVSE</sequence>
<dbReference type="EC" id="2.7.-.-" evidence="5"/>
<dbReference type="EMBL" id="BA000007">
    <property type="protein sequence ID" value="BAB38519.2"/>
    <property type="molecule type" value="Genomic_DNA"/>
</dbReference>
<dbReference type="RefSeq" id="NP_313123.2">
    <property type="nucleotide sequence ID" value="NC_002695.1"/>
</dbReference>
<dbReference type="RefSeq" id="WP_001302789.1">
    <property type="nucleotide sequence ID" value="NZ_SDVX01000004.1"/>
</dbReference>
<dbReference type="SMR" id="A0A0H3JML2"/>
<dbReference type="STRING" id="155864.Z5716"/>
<dbReference type="GeneID" id="914018"/>
<dbReference type="KEGG" id="ecs:ECs_5096"/>
<dbReference type="PATRIC" id="fig|386585.9.peg.5326"/>
<dbReference type="eggNOG" id="COG2194">
    <property type="taxonomic scope" value="Bacteria"/>
</dbReference>
<dbReference type="HOGENOM" id="CLU_018534_1_0_6"/>
<dbReference type="Proteomes" id="UP000000558">
    <property type="component" value="Chromosome"/>
</dbReference>
<dbReference type="GO" id="GO:0005886">
    <property type="term" value="C:plasma membrane"/>
    <property type="evidence" value="ECO:0007669"/>
    <property type="project" value="UniProtKB-SubCell"/>
</dbReference>
<dbReference type="GO" id="GO:0016776">
    <property type="term" value="F:phosphotransferase activity, phosphate group as acceptor"/>
    <property type="evidence" value="ECO:0007669"/>
    <property type="project" value="TreeGrafter"/>
</dbReference>
<dbReference type="GO" id="GO:0009244">
    <property type="term" value="P:lipopolysaccharide core region biosynthetic process"/>
    <property type="evidence" value="ECO:0007669"/>
    <property type="project" value="TreeGrafter"/>
</dbReference>
<dbReference type="CDD" id="cd16017">
    <property type="entry name" value="LptA"/>
    <property type="match status" value="1"/>
</dbReference>
<dbReference type="FunFam" id="3.40.720.10:FF:000022">
    <property type="entry name" value="Phosphoethanolamine transferase eptA"/>
    <property type="match status" value="1"/>
</dbReference>
<dbReference type="Gene3D" id="3.40.720.10">
    <property type="entry name" value="Alkaline Phosphatase, subunit A"/>
    <property type="match status" value="1"/>
</dbReference>
<dbReference type="InterPro" id="IPR017850">
    <property type="entry name" value="Alkaline_phosphatase_core_sf"/>
</dbReference>
<dbReference type="InterPro" id="IPR012549">
    <property type="entry name" value="EptA-like_N"/>
</dbReference>
<dbReference type="InterPro" id="IPR040423">
    <property type="entry name" value="PEA_transferase"/>
</dbReference>
<dbReference type="InterPro" id="IPR000917">
    <property type="entry name" value="Sulfatase_N"/>
</dbReference>
<dbReference type="NCBIfam" id="NF028537">
    <property type="entry name" value="P_eth_NH2_trans"/>
    <property type="match status" value="1"/>
</dbReference>
<dbReference type="NCBIfam" id="NF008619">
    <property type="entry name" value="PRK11598.1"/>
    <property type="match status" value="1"/>
</dbReference>
<dbReference type="PANTHER" id="PTHR30443">
    <property type="entry name" value="INNER MEMBRANE PROTEIN"/>
    <property type="match status" value="1"/>
</dbReference>
<dbReference type="PANTHER" id="PTHR30443:SF0">
    <property type="entry name" value="PHOSPHOETHANOLAMINE TRANSFERASE EPTA"/>
    <property type="match status" value="1"/>
</dbReference>
<dbReference type="Pfam" id="PF08019">
    <property type="entry name" value="EptA_B_N"/>
    <property type="match status" value="1"/>
</dbReference>
<dbReference type="Pfam" id="PF00884">
    <property type="entry name" value="Sulfatase"/>
    <property type="match status" value="1"/>
</dbReference>
<dbReference type="SUPFAM" id="SSF53649">
    <property type="entry name" value="Alkaline phosphatase-like"/>
    <property type="match status" value="1"/>
</dbReference>
<protein>
    <recommendedName>
        <fullName>Phosphoethanolamine transferase EptA</fullName>
        <ecNumber evidence="5">2.7.-.-</ecNumber>
    </recommendedName>
    <alternativeName>
        <fullName>Polymyxin resistance protein PmrC</fullName>
    </alternativeName>
</protein>
<proteinExistence type="inferred from homology"/>
<accession>A0A0H3JML2</accession>
<name>EPTA_ECO57</name>
<comment type="function">
    <text evidence="3">There are several lipid A forms in this strain, including a phosphoethanolamine (1-O-P-pEtN) form; overexpression of this gene leads to higher levels of the 1-O-P-pEtN form of lipid A.</text>
</comment>
<comment type="subcellular location">
    <subcellularLocation>
        <location evidence="1">Cell inner membrane</location>
        <topology evidence="2">Multi-pass membrane protein</topology>
    </subcellularLocation>
</comment>
<comment type="disruption phenotype">
    <text evidence="3">Decreased amounts of the 1-O-P-PEtN form of lipid A.</text>
</comment>
<comment type="similarity">
    <text evidence="4">Belongs to the phosphoethanolamine transferase family. EptA subfamily.</text>
</comment>
<feature type="chain" id="PRO_0000446241" description="Phosphoethanolamine transferase EptA">
    <location>
        <begin position="1"/>
        <end position="547"/>
    </location>
</feature>
<feature type="transmembrane region" description="Helical" evidence="2">
    <location>
        <begin position="13"/>
        <end position="33"/>
    </location>
</feature>
<feature type="transmembrane region" description="Helical" evidence="2">
    <location>
        <begin position="48"/>
        <end position="68"/>
    </location>
</feature>
<feature type="transmembrane region" description="Helical" evidence="2">
    <location>
        <begin position="80"/>
        <end position="100"/>
    </location>
</feature>
<feature type="transmembrane region" description="Helical" evidence="2">
    <location>
        <begin position="124"/>
        <end position="144"/>
    </location>
</feature>
<feature type="transmembrane region" description="Helical" evidence="2">
    <location>
        <begin position="155"/>
        <end position="175"/>
    </location>
</feature>
<gene>
    <name type="primary">eptA</name>
    <name type="synonym">pmrC</name>
    <name evidence="6" type="ordered locus">ECs5096</name>
</gene>
<evidence type="ECO:0000250" key="1">
    <source>
        <dbReference type="UniProtKB" id="P30845"/>
    </source>
</evidence>
<evidence type="ECO:0000255" key="2"/>
<evidence type="ECO:0000269" key="3">
    <source>
    </source>
</evidence>
<evidence type="ECO:0000305" key="4"/>
<evidence type="ECO:0000305" key="5">
    <source>
    </source>
</evidence>
<evidence type="ECO:0000312" key="6">
    <source>
        <dbReference type="EMBL" id="BAB38519.2"/>
    </source>
</evidence>